<comment type="function">
    <text evidence="1">Involved in unsaturated fatty acids biosynthesis. Catalyzes the dehydration of short chain beta-hydroxyacyl-ACPs and long chain saturated and unsaturated beta-hydroxyacyl-ACPs.</text>
</comment>
<comment type="catalytic activity">
    <reaction evidence="1">
        <text>a (3R)-hydroxyacyl-[ACP] = a (2E)-enoyl-[ACP] + H2O</text>
        <dbReference type="Rhea" id="RHEA:13097"/>
        <dbReference type="Rhea" id="RHEA-COMP:9925"/>
        <dbReference type="Rhea" id="RHEA-COMP:9945"/>
        <dbReference type="ChEBI" id="CHEBI:15377"/>
        <dbReference type="ChEBI" id="CHEBI:78784"/>
        <dbReference type="ChEBI" id="CHEBI:78827"/>
        <dbReference type="EC" id="4.2.1.59"/>
    </reaction>
</comment>
<comment type="subcellular location">
    <subcellularLocation>
        <location evidence="1">Cytoplasm</location>
    </subcellularLocation>
</comment>
<comment type="similarity">
    <text evidence="1">Belongs to the thioester dehydratase family. FabZ subfamily.</text>
</comment>
<accession>A7I313</accession>
<proteinExistence type="inferred from homology"/>
<feature type="chain" id="PRO_1000049842" description="3-hydroxyacyl-[acyl-carrier-protein] dehydratase FabZ">
    <location>
        <begin position="1"/>
        <end position="145"/>
    </location>
</feature>
<feature type="active site" evidence="1">
    <location>
        <position position="48"/>
    </location>
</feature>
<reference key="1">
    <citation type="submission" date="2007-07" db="EMBL/GenBank/DDBJ databases">
        <title>Complete genome sequence of Campylobacter hominis ATCC BAA-381, a commensal isolated from the human gastrointestinal tract.</title>
        <authorList>
            <person name="Fouts D.E."/>
            <person name="Mongodin E.F."/>
            <person name="Puiu D."/>
            <person name="Sebastian Y."/>
            <person name="Miller W.G."/>
            <person name="Mandrell R.E."/>
            <person name="Nelson K.E."/>
        </authorList>
    </citation>
    <scope>NUCLEOTIDE SEQUENCE [LARGE SCALE GENOMIC DNA]</scope>
    <source>
        <strain>ATCC BAA-381 / DSM 21671 / CCUG 45161 / LMG 19568 / NCTC 13146 / CH001A</strain>
    </source>
</reference>
<evidence type="ECO:0000255" key="1">
    <source>
        <dbReference type="HAMAP-Rule" id="MF_00406"/>
    </source>
</evidence>
<sequence length="145" mass="16550">MIDINEILEILPHRFPFLLIDRVIDLQPGISIKAYKNVTFNEQIFQGHFPGHPIYPGVMIIEGMAQAGGVLAFKSTTDEDLSNKVVYFMTIDKAKFRQPIRPGDRLEYRLNVLKHRGRIWVLKGEALVDDKVAAEAELQAMIMDK</sequence>
<protein>
    <recommendedName>
        <fullName evidence="1">3-hydroxyacyl-[acyl-carrier-protein] dehydratase FabZ</fullName>
        <ecNumber evidence="1">4.2.1.59</ecNumber>
    </recommendedName>
    <alternativeName>
        <fullName evidence="1">(3R)-hydroxymyristoyl-[acyl-carrier-protein] dehydratase</fullName>
        <shortName evidence="1">(3R)-hydroxymyristoyl-ACP dehydrase</shortName>
    </alternativeName>
    <alternativeName>
        <fullName evidence="1">Beta-hydroxyacyl-ACP dehydratase</fullName>
    </alternativeName>
</protein>
<name>FABZ_CAMHC</name>
<dbReference type="EC" id="4.2.1.59" evidence="1"/>
<dbReference type="EMBL" id="CP000776">
    <property type="protein sequence ID" value="ABS52121.1"/>
    <property type="molecule type" value="Genomic_DNA"/>
</dbReference>
<dbReference type="RefSeq" id="WP_012109207.1">
    <property type="nucleotide sequence ID" value="NC_009714.1"/>
</dbReference>
<dbReference type="SMR" id="A7I313"/>
<dbReference type="STRING" id="360107.CHAB381_1355"/>
<dbReference type="KEGG" id="cha:CHAB381_1355"/>
<dbReference type="eggNOG" id="COG0764">
    <property type="taxonomic scope" value="Bacteria"/>
</dbReference>
<dbReference type="HOGENOM" id="CLU_078912_1_2_7"/>
<dbReference type="OrthoDB" id="9772788at2"/>
<dbReference type="Proteomes" id="UP000002407">
    <property type="component" value="Chromosome"/>
</dbReference>
<dbReference type="GO" id="GO:0005737">
    <property type="term" value="C:cytoplasm"/>
    <property type="evidence" value="ECO:0007669"/>
    <property type="project" value="UniProtKB-SubCell"/>
</dbReference>
<dbReference type="GO" id="GO:0016020">
    <property type="term" value="C:membrane"/>
    <property type="evidence" value="ECO:0007669"/>
    <property type="project" value="GOC"/>
</dbReference>
<dbReference type="GO" id="GO:0019171">
    <property type="term" value="F:(3R)-hydroxyacyl-[acyl-carrier-protein] dehydratase activity"/>
    <property type="evidence" value="ECO:0007669"/>
    <property type="project" value="UniProtKB-EC"/>
</dbReference>
<dbReference type="GO" id="GO:0006633">
    <property type="term" value="P:fatty acid biosynthetic process"/>
    <property type="evidence" value="ECO:0007669"/>
    <property type="project" value="UniProtKB-UniRule"/>
</dbReference>
<dbReference type="GO" id="GO:0009245">
    <property type="term" value="P:lipid A biosynthetic process"/>
    <property type="evidence" value="ECO:0007669"/>
    <property type="project" value="UniProtKB-UniRule"/>
</dbReference>
<dbReference type="CDD" id="cd01288">
    <property type="entry name" value="FabZ"/>
    <property type="match status" value="1"/>
</dbReference>
<dbReference type="FunFam" id="3.10.129.10:FF:000001">
    <property type="entry name" value="3-hydroxyacyl-[acyl-carrier-protein] dehydratase FabZ"/>
    <property type="match status" value="1"/>
</dbReference>
<dbReference type="Gene3D" id="3.10.129.10">
    <property type="entry name" value="Hotdog Thioesterase"/>
    <property type="match status" value="1"/>
</dbReference>
<dbReference type="HAMAP" id="MF_00406">
    <property type="entry name" value="FabZ"/>
    <property type="match status" value="1"/>
</dbReference>
<dbReference type="InterPro" id="IPR013114">
    <property type="entry name" value="FabA_FabZ"/>
</dbReference>
<dbReference type="InterPro" id="IPR010084">
    <property type="entry name" value="FabZ"/>
</dbReference>
<dbReference type="InterPro" id="IPR029069">
    <property type="entry name" value="HotDog_dom_sf"/>
</dbReference>
<dbReference type="NCBIfam" id="TIGR01750">
    <property type="entry name" value="fabZ"/>
    <property type="match status" value="1"/>
</dbReference>
<dbReference type="NCBIfam" id="NF000582">
    <property type="entry name" value="PRK00006.1"/>
    <property type="match status" value="1"/>
</dbReference>
<dbReference type="PANTHER" id="PTHR30272">
    <property type="entry name" value="3-HYDROXYACYL-[ACYL-CARRIER-PROTEIN] DEHYDRATASE"/>
    <property type="match status" value="1"/>
</dbReference>
<dbReference type="PANTHER" id="PTHR30272:SF1">
    <property type="entry name" value="3-HYDROXYACYL-[ACYL-CARRIER-PROTEIN] DEHYDRATASE"/>
    <property type="match status" value="1"/>
</dbReference>
<dbReference type="Pfam" id="PF07977">
    <property type="entry name" value="FabA"/>
    <property type="match status" value="1"/>
</dbReference>
<dbReference type="SUPFAM" id="SSF54637">
    <property type="entry name" value="Thioesterase/thiol ester dehydrase-isomerase"/>
    <property type="match status" value="1"/>
</dbReference>
<organism>
    <name type="scientific">Campylobacter hominis (strain ATCC BAA-381 / DSM 21671 / CCUG 45161 / LMG 19568 / NCTC 13146 / CH001A)</name>
    <dbReference type="NCBI Taxonomy" id="360107"/>
    <lineage>
        <taxon>Bacteria</taxon>
        <taxon>Pseudomonadati</taxon>
        <taxon>Campylobacterota</taxon>
        <taxon>Epsilonproteobacteria</taxon>
        <taxon>Campylobacterales</taxon>
        <taxon>Campylobacteraceae</taxon>
        <taxon>Campylobacter</taxon>
    </lineage>
</organism>
<keyword id="KW-0963">Cytoplasm</keyword>
<keyword id="KW-0441">Lipid A biosynthesis</keyword>
<keyword id="KW-0444">Lipid biosynthesis</keyword>
<keyword id="KW-0443">Lipid metabolism</keyword>
<keyword id="KW-0456">Lyase</keyword>
<keyword id="KW-1185">Reference proteome</keyword>
<gene>
    <name evidence="1" type="primary">fabZ</name>
    <name type="ordered locus">CHAB381_1355</name>
</gene>